<gene>
    <name evidence="1" type="primary">adk</name>
    <name type="ordered locus">Xaut_4777</name>
</gene>
<keyword id="KW-0067">ATP-binding</keyword>
<keyword id="KW-0963">Cytoplasm</keyword>
<keyword id="KW-0418">Kinase</keyword>
<keyword id="KW-0545">Nucleotide biosynthesis</keyword>
<keyword id="KW-0547">Nucleotide-binding</keyword>
<keyword id="KW-1185">Reference proteome</keyword>
<keyword id="KW-0808">Transferase</keyword>
<accession>A7IPP9</accession>
<feature type="chain" id="PRO_1000100628" description="Adenylate kinase">
    <location>
        <begin position="1"/>
        <end position="195"/>
    </location>
</feature>
<feature type="region of interest" description="NMP" evidence="1">
    <location>
        <begin position="30"/>
        <end position="59"/>
    </location>
</feature>
<feature type="region of interest" description="LID" evidence="1">
    <location>
        <begin position="126"/>
        <end position="143"/>
    </location>
</feature>
<feature type="binding site" evidence="1">
    <location>
        <begin position="10"/>
        <end position="15"/>
    </location>
    <ligand>
        <name>ATP</name>
        <dbReference type="ChEBI" id="CHEBI:30616"/>
    </ligand>
</feature>
<feature type="binding site" evidence="1">
    <location>
        <position position="31"/>
    </location>
    <ligand>
        <name>AMP</name>
        <dbReference type="ChEBI" id="CHEBI:456215"/>
    </ligand>
</feature>
<feature type="binding site" evidence="1">
    <location>
        <position position="36"/>
    </location>
    <ligand>
        <name>AMP</name>
        <dbReference type="ChEBI" id="CHEBI:456215"/>
    </ligand>
</feature>
<feature type="binding site" evidence="1">
    <location>
        <begin position="57"/>
        <end position="59"/>
    </location>
    <ligand>
        <name>AMP</name>
        <dbReference type="ChEBI" id="CHEBI:456215"/>
    </ligand>
</feature>
<feature type="binding site" evidence="1">
    <location>
        <begin position="85"/>
        <end position="88"/>
    </location>
    <ligand>
        <name>AMP</name>
        <dbReference type="ChEBI" id="CHEBI:456215"/>
    </ligand>
</feature>
<feature type="binding site" evidence="1">
    <location>
        <position position="92"/>
    </location>
    <ligand>
        <name>AMP</name>
        <dbReference type="ChEBI" id="CHEBI:456215"/>
    </ligand>
</feature>
<feature type="binding site" evidence="1">
    <location>
        <position position="127"/>
    </location>
    <ligand>
        <name>ATP</name>
        <dbReference type="ChEBI" id="CHEBI:30616"/>
    </ligand>
</feature>
<feature type="binding site" evidence="1">
    <location>
        <position position="150"/>
    </location>
    <ligand>
        <name>AMP</name>
        <dbReference type="ChEBI" id="CHEBI:456215"/>
    </ligand>
</feature>
<feature type="binding site" evidence="1">
    <location>
        <position position="178"/>
    </location>
    <ligand>
        <name>ATP</name>
        <dbReference type="ChEBI" id="CHEBI:30616"/>
    </ligand>
</feature>
<sequence>MRLVLLGPPGAGKGTQAQRLVARHGIVQLSTGDMLRAAVAAGTPVGLKAKAVMDAGGLVSDEIVIGIIAERLDSPDAKNGFILDGFPRTVAQAEALDQLLASKGLKLDAVIELVVDQEKLVNRILNRAAEAQAKGEAVRKDDDPVVFKTRLEAYNRDTAVVAPYYKARGQLKQIDGMAPIDQVTAAIDGVLAEAA</sequence>
<name>KAD_XANP2</name>
<reference key="1">
    <citation type="submission" date="2007-07" db="EMBL/GenBank/DDBJ databases">
        <title>Complete sequence of chromosome of Xanthobacter autotrophicus Py2.</title>
        <authorList>
            <consortium name="US DOE Joint Genome Institute"/>
            <person name="Copeland A."/>
            <person name="Lucas S."/>
            <person name="Lapidus A."/>
            <person name="Barry K."/>
            <person name="Glavina del Rio T."/>
            <person name="Hammon N."/>
            <person name="Israni S."/>
            <person name="Dalin E."/>
            <person name="Tice H."/>
            <person name="Pitluck S."/>
            <person name="Sims D."/>
            <person name="Brettin T."/>
            <person name="Bruce D."/>
            <person name="Detter J.C."/>
            <person name="Han C."/>
            <person name="Tapia R."/>
            <person name="Brainard J."/>
            <person name="Schmutz J."/>
            <person name="Larimer F."/>
            <person name="Land M."/>
            <person name="Hauser L."/>
            <person name="Kyrpides N."/>
            <person name="Kim E."/>
            <person name="Ensigns S.A."/>
            <person name="Richardson P."/>
        </authorList>
    </citation>
    <scope>NUCLEOTIDE SEQUENCE [LARGE SCALE GENOMIC DNA]</scope>
    <source>
        <strain>ATCC BAA-1158 / Py2</strain>
    </source>
</reference>
<evidence type="ECO:0000255" key="1">
    <source>
        <dbReference type="HAMAP-Rule" id="MF_00235"/>
    </source>
</evidence>
<organism>
    <name type="scientific">Xanthobacter autotrophicus (strain ATCC BAA-1158 / Py2)</name>
    <dbReference type="NCBI Taxonomy" id="78245"/>
    <lineage>
        <taxon>Bacteria</taxon>
        <taxon>Pseudomonadati</taxon>
        <taxon>Pseudomonadota</taxon>
        <taxon>Alphaproteobacteria</taxon>
        <taxon>Hyphomicrobiales</taxon>
        <taxon>Xanthobacteraceae</taxon>
        <taxon>Xanthobacter</taxon>
    </lineage>
</organism>
<comment type="function">
    <text evidence="1">Catalyzes the reversible transfer of the terminal phosphate group between ATP and AMP. Plays an important role in cellular energy homeostasis and in adenine nucleotide metabolism.</text>
</comment>
<comment type="catalytic activity">
    <reaction evidence="1">
        <text>AMP + ATP = 2 ADP</text>
        <dbReference type="Rhea" id="RHEA:12973"/>
        <dbReference type="ChEBI" id="CHEBI:30616"/>
        <dbReference type="ChEBI" id="CHEBI:456215"/>
        <dbReference type="ChEBI" id="CHEBI:456216"/>
        <dbReference type="EC" id="2.7.4.3"/>
    </reaction>
</comment>
<comment type="pathway">
    <text evidence="1">Purine metabolism; AMP biosynthesis via salvage pathway; AMP from ADP: step 1/1.</text>
</comment>
<comment type="subunit">
    <text evidence="1">Monomer.</text>
</comment>
<comment type="subcellular location">
    <subcellularLocation>
        <location evidence="1">Cytoplasm</location>
    </subcellularLocation>
</comment>
<comment type="domain">
    <text evidence="1">Consists of three domains, a large central CORE domain and two small peripheral domains, NMPbind and LID, which undergo movements during catalysis. The LID domain closes over the site of phosphoryl transfer upon ATP binding. Assembling and dissambling the active center during each catalytic cycle provides an effective means to prevent ATP hydrolysis.</text>
</comment>
<comment type="similarity">
    <text evidence="1">Belongs to the adenylate kinase family.</text>
</comment>
<dbReference type="EC" id="2.7.4.3" evidence="1"/>
<dbReference type="EMBL" id="CP000781">
    <property type="protein sequence ID" value="ABS69995.1"/>
    <property type="molecule type" value="Genomic_DNA"/>
</dbReference>
<dbReference type="SMR" id="A7IPP9"/>
<dbReference type="STRING" id="78245.Xaut_4777"/>
<dbReference type="KEGG" id="xau:Xaut_4777"/>
<dbReference type="eggNOG" id="COG0563">
    <property type="taxonomic scope" value="Bacteria"/>
</dbReference>
<dbReference type="HOGENOM" id="CLU_032354_4_1_5"/>
<dbReference type="OrthoDB" id="9805030at2"/>
<dbReference type="PhylomeDB" id="A7IPP9"/>
<dbReference type="UniPathway" id="UPA00588">
    <property type="reaction ID" value="UER00649"/>
</dbReference>
<dbReference type="Proteomes" id="UP000002417">
    <property type="component" value="Chromosome"/>
</dbReference>
<dbReference type="GO" id="GO:0005737">
    <property type="term" value="C:cytoplasm"/>
    <property type="evidence" value="ECO:0007669"/>
    <property type="project" value="UniProtKB-SubCell"/>
</dbReference>
<dbReference type="GO" id="GO:0004017">
    <property type="term" value="F:adenylate kinase activity"/>
    <property type="evidence" value="ECO:0007669"/>
    <property type="project" value="UniProtKB-UniRule"/>
</dbReference>
<dbReference type="GO" id="GO:0005524">
    <property type="term" value="F:ATP binding"/>
    <property type="evidence" value="ECO:0007669"/>
    <property type="project" value="UniProtKB-UniRule"/>
</dbReference>
<dbReference type="GO" id="GO:0044209">
    <property type="term" value="P:AMP salvage"/>
    <property type="evidence" value="ECO:0007669"/>
    <property type="project" value="UniProtKB-UniRule"/>
</dbReference>
<dbReference type="CDD" id="cd01428">
    <property type="entry name" value="ADK"/>
    <property type="match status" value="1"/>
</dbReference>
<dbReference type="Gene3D" id="3.40.50.300">
    <property type="entry name" value="P-loop containing nucleotide triphosphate hydrolases"/>
    <property type="match status" value="1"/>
</dbReference>
<dbReference type="HAMAP" id="MF_00235">
    <property type="entry name" value="Adenylate_kinase_Adk"/>
    <property type="match status" value="1"/>
</dbReference>
<dbReference type="InterPro" id="IPR006259">
    <property type="entry name" value="Adenyl_kin_sub"/>
</dbReference>
<dbReference type="InterPro" id="IPR000850">
    <property type="entry name" value="Adenylat/UMP-CMP_kin"/>
</dbReference>
<dbReference type="InterPro" id="IPR033690">
    <property type="entry name" value="Adenylat_kinase_CS"/>
</dbReference>
<dbReference type="InterPro" id="IPR027417">
    <property type="entry name" value="P-loop_NTPase"/>
</dbReference>
<dbReference type="NCBIfam" id="TIGR01351">
    <property type="entry name" value="adk"/>
    <property type="match status" value="1"/>
</dbReference>
<dbReference type="NCBIfam" id="NF001381">
    <property type="entry name" value="PRK00279.1-3"/>
    <property type="match status" value="1"/>
</dbReference>
<dbReference type="NCBIfam" id="NF011100">
    <property type="entry name" value="PRK14527.1"/>
    <property type="match status" value="1"/>
</dbReference>
<dbReference type="NCBIfam" id="NF011101">
    <property type="entry name" value="PRK14528.1"/>
    <property type="match status" value="1"/>
</dbReference>
<dbReference type="NCBIfam" id="NF011104">
    <property type="entry name" value="PRK14531.1"/>
    <property type="match status" value="1"/>
</dbReference>
<dbReference type="NCBIfam" id="NF011105">
    <property type="entry name" value="PRK14532.1"/>
    <property type="match status" value="1"/>
</dbReference>
<dbReference type="PANTHER" id="PTHR23359">
    <property type="entry name" value="NUCLEOTIDE KINASE"/>
    <property type="match status" value="1"/>
</dbReference>
<dbReference type="Pfam" id="PF00406">
    <property type="entry name" value="ADK"/>
    <property type="match status" value="1"/>
</dbReference>
<dbReference type="PRINTS" id="PR00094">
    <property type="entry name" value="ADENYLTKNASE"/>
</dbReference>
<dbReference type="SUPFAM" id="SSF52540">
    <property type="entry name" value="P-loop containing nucleoside triphosphate hydrolases"/>
    <property type="match status" value="1"/>
</dbReference>
<dbReference type="PROSITE" id="PS00113">
    <property type="entry name" value="ADENYLATE_KINASE"/>
    <property type="match status" value="1"/>
</dbReference>
<proteinExistence type="inferred from homology"/>
<protein>
    <recommendedName>
        <fullName evidence="1">Adenylate kinase</fullName>
        <shortName evidence="1">AK</shortName>
        <ecNumber evidence="1">2.7.4.3</ecNumber>
    </recommendedName>
    <alternativeName>
        <fullName evidence="1">ATP-AMP transphosphorylase</fullName>
    </alternativeName>
    <alternativeName>
        <fullName evidence="1">ATP:AMP phosphotransferase</fullName>
    </alternativeName>
    <alternativeName>
        <fullName evidence="1">Adenylate monophosphate kinase</fullName>
    </alternativeName>
</protein>